<comment type="catalytic activity">
    <reaction>
        <text>an acyl phosphate + H2O = a carboxylate + phosphate + H(+)</text>
        <dbReference type="Rhea" id="RHEA:14965"/>
        <dbReference type="ChEBI" id="CHEBI:15377"/>
        <dbReference type="ChEBI" id="CHEBI:15378"/>
        <dbReference type="ChEBI" id="CHEBI:29067"/>
        <dbReference type="ChEBI" id="CHEBI:43474"/>
        <dbReference type="ChEBI" id="CHEBI:59918"/>
        <dbReference type="EC" id="3.6.1.7"/>
    </reaction>
</comment>
<comment type="similarity">
    <text evidence="2">Belongs to the acylphosphatase family.</text>
</comment>
<organism>
    <name type="scientific">Xanthomonas campestris pv. campestris (strain 8004)</name>
    <dbReference type="NCBI Taxonomy" id="314565"/>
    <lineage>
        <taxon>Bacteria</taxon>
        <taxon>Pseudomonadati</taxon>
        <taxon>Pseudomonadota</taxon>
        <taxon>Gammaproteobacteria</taxon>
        <taxon>Lysobacterales</taxon>
        <taxon>Lysobacteraceae</taxon>
        <taxon>Xanthomonas</taxon>
    </lineage>
</organism>
<gene>
    <name type="primary">acyP</name>
    <name type="ordered locus">XC_3368</name>
</gene>
<accession>Q4URB1</accession>
<dbReference type="EC" id="3.6.1.7"/>
<dbReference type="EMBL" id="CP000050">
    <property type="protein sequence ID" value="AAY50412.1"/>
    <property type="molecule type" value="Genomic_DNA"/>
</dbReference>
<dbReference type="RefSeq" id="WP_011036098.1">
    <property type="nucleotide sequence ID" value="NZ_CP155948.1"/>
</dbReference>
<dbReference type="SMR" id="Q4URB1"/>
<dbReference type="KEGG" id="xcb:XC_3368"/>
<dbReference type="HOGENOM" id="CLU_141932_1_3_6"/>
<dbReference type="Proteomes" id="UP000000420">
    <property type="component" value="Chromosome"/>
</dbReference>
<dbReference type="GO" id="GO:0003998">
    <property type="term" value="F:acylphosphatase activity"/>
    <property type="evidence" value="ECO:0007669"/>
    <property type="project" value="UniProtKB-EC"/>
</dbReference>
<dbReference type="Gene3D" id="3.30.70.100">
    <property type="match status" value="1"/>
</dbReference>
<dbReference type="InterPro" id="IPR020456">
    <property type="entry name" value="Acylphosphatase"/>
</dbReference>
<dbReference type="InterPro" id="IPR001792">
    <property type="entry name" value="Acylphosphatase-like_dom"/>
</dbReference>
<dbReference type="InterPro" id="IPR036046">
    <property type="entry name" value="Acylphosphatase-like_dom_sf"/>
</dbReference>
<dbReference type="NCBIfam" id="NF011018">
    <property type="entry name" value="PRK14446.1"/>
    <property type="match status" value="1"/>
</dbReference>
<dbReference type="PANTHER" id="PTHR47268">
    <property type="entry name" value="ACYLPHOSPHATASE"/>
    <property type="match status" value="1"/>
</dbReference>
<dbReference type="PANTHER" id="PTHR47268:SF4">
    <property type="entry name" value="ACYLPHOSPHATASE"/>
    <property type="match status" value="1"/>
</dbReference>
<dbReference type="Pfam" id="PF00708">
    <property type="entry name" value="Acylphosphatase"/>
    <property type="match status" value="1"/>
</dbReference>
<dbReference type="SUPFAM" id="SSF54975">
    <property type="entry name" value="Acylphosphatase/BLUF domain-like"/>
    <property type="match status" value="1"/>
</dbReference>
<dbReference type="PROSITE" id="PS51160">
    <property type="entry name" value="ACYLPHOSPHATASE_3"/>
    <property type="match status" value="1"/>
</dbReference>
<feature type="chain" id="PRO_0000326847" description="Acylphosphatase">
    <location>
        <begin position="1"/>
        <end position="88"/>
    </location>
</feature>
<feature type="domain" description="Acylphosphatase-like" evidence="1">
    <location>
        <begin position="3"/>
        <end position="88"/>
    </location>
</feature>
<feature type="active site" evidence="1">
    <location>
        <position position="18"/>
    </location>
</feature>
<feature type="active site" evidence="1">
    <location>
        <position position="36"/>
    </location>
</feature>
<keyword id="KW-0378">Hydrolase</keyword>
<sequence length="88" mass="9299">MQAARFIFTGVVQGVFFRASTRERALALQLRGHARNQADGSVEVVAAGSAAALEALEHWLWQGSPASKVASVTRTPCAIPTTEAFVTG</sequence>
<proteinExistence type="inferred from homology"/>
<evidence type="ECO:0000255" key="1">
    <source>
        <dbReference type="PROSITE-ProRule" id="PRU00520"/>
    </source>
</evidence>
<evidence type="ECO:0000305" key="2"/>
<name>ACYP_XANC8</name>
<reference key="1">
    <citation type="journal article" date="2005" name="Genome Res.">
        <title>Comparative and functional genomic analyses of the pathogenicity of phytopathogen Xanthomonas campestris pv. campestris.</title>
        <authorList>
            <person name="Qian W."/>
            <person name="Jia Y."/>
            <person name="Ren S.-X."/>
            <person name="He Y.-Q."/>
            <person name="Feng J.-X."/>
            <person name="Lu L.-F."/>
            <person name="Sun Q."/>
            <person name="Ying G."/>
            <person name="Tang D.-J."/>
            <person name="Tang H."/>
            <person name="Wu W."/>
            <person name="Hao P."/>
            <person name="Wang L."/>
            <person name="Jiang B.-L."/>
            <person name="Zeng S."/>
            <person name="Gu W.-Y."/>
            <person name="Lu G."/>
            <person name="Rong L."/>
            <person name="Tian Y."/>
            <person name="Yao Z."/>
            <person name="Fu G."/>
            <person name="Chen B."/>
            <person name="Fang R."/>
            <person name="Qiang B."/>
            <person name="Chen Z."/>
            <person name="Zhao G.-P."/>
            <person name="Tang J.-L."/>
            <person name="He C."/>
        </authorList>
    </citation>
    <scope>NUCLEOTIDE SEQUENCE [LARGE SCALE GENOMIC DNA]</scope>
    <source>
        <strain>8004</strain>
    </source>
</reference>
<protein>
    <recommendedName>
        <fullName>Acylphosphatase</fullName>
        <ecNumber>3.6.1.7</ecNumber>
    </recommendedName>
    <alternativeName>
        <fullName>Acylphosphate phosphohydrolase</fullName>
    </alternativeName>
</protein>